<reference key="1">
    <citation type="submission" date="2006-08" db="EMBL/GenBank/DDBJ databases">
        <title>Complete sequence of chromosome 1 of Shewanella sp. MR-7.</title>
        <authorList>
            <person name="Copeland A."/>
            <person name="Lucas S."/>
            <person name="Lapidus A."/>
            <person name="Barry K."/>
            <person name="Detter J.C."/>
            <person name="Glavina del Rio T."/>
            <person name="Hammon N."/>
            <person name="Israni S."/>
            <person name="Dalin E."/>
            <person name="Tice H."/>
            <person name="Pitluck S."/>
            <person name="Kiss H."/>
            <person name="Brettin T."/>
            <person name="Bruce D."/>
            <person name="Han C."/>
            <person name="Tapia R."/>
            <person name="Gilna P."/>
            <person name="Schmutz J."/>
            <person name="Larimer F."/>
            <person name="Land M."/>
            <person name="Hauser L."/>
            <person name="Kyrpides N."/>
            <person name="Mikhailova N."/>
            <person name="Nealson K."/>
            <person name="Konstantinidis K."/>
            <person name="Klappenbach J."/>
            <person name="Tiedje J."/>
            <person name="Richardson P."/>
        </authorList>
    </citation>
    <scope>NUCLEOTIDE SEQUENCE [LARGE SCALE GENOMIC DNA]</scope>
    <source>
        <strain>MR-7</strain>
    </source>
</reference>
<sequence length="699" mass="75274">MNPIVKSFEYGQHTVTLETGVIARQADAAVLASMGDTTVLVTVVGKKEAEAGRDFFPLTVNYQEKTYAAGKIPGGFFKREGRPSEDETLIARLIDRPIRPLFPNGFTNEVQVIITVVSVDPQIEPDIISMIGTSAALAISGIPFSGPLGAARVGYINGEYVLNPTVTQLANSQLNLVVAGTEGAVLMVESEAQALPEEVMLGSVVYGHDQQQVVIKAIAEFKAEAGKPAWNWTAPVANEALVAQVKELAEAGLAQAYQIQVKQERYAQVAVVKAAAKEALLAANPEVDLREVDGLLGSLEKKVVRGRIIRGEPRIDGREPDMVRALSVLAGVLPRTHGSALFTRGETQALVTCTLGTERDAQKIDSIMGERTNRFMLHYNFPPYSVGETGMVGSPKRREIGHGKLAWRGINAVMPTAEEFPYSVRVVSEITESNGSSSMASVCGTSLALMDAGVPIKTSVAGIAMGLVKEGDNFVVLSDILGDEDHLGDMDFKVAGTRDGVTALQMDIKIEGITKEIMEIALQQAYGARVHILNVMDQAIGSHRDDISDHAPRITTIKINPEKIRDVIGKGGAVIRALTEETGTTIELEDDGTVKIASSNGEATKEAIRRIEEITSEVEVGRIYNGKVIRIVDFGAFVNILPGKDGLVHISQISDERVANVSDHLELNQEVTVKVMEVDRQGRVRLSIKEAQTKEAAAE</sequence>
<evidence type="ECO:0000255" key="1">
    <source>
        <dbReference type="HAMAP-Rule" id="MF_01595"/>
    </source>
</evidence>
<protein>
    <recommendedName>
        <fullName evidence="1">Polyribonucleotide nucleotidyltransferase</fullName>
        <ecNumber evidence="1">2.7.7.8</ecNumber>
    </recommendedName>
    <alternativeName>
        <fullName evidence="1">Polynucleotide phosphorylase</fullName>
        <shortName evidence="1">PNPase</shortName>
    </alternativeName>
</protein>
<dbReference type="EC" id="2.7.7.8" evidence="1"/>
<dbReference type="EMBL" id="CP000444">
    <property type="protein sequence ID" value="ABI42095.1"/>
    <property type="molecule type" value="Genomic_DNA"/>
</dbReference>
<dbReference type="SMR" id="Q0HXR0"/>
<dbReference type="KEGG" id="shm:Shewmr7_1096"/>
<dbReference type="HOGENOM" id="CLU_004217_2_2_6"/>
<dbReference type="GO" id="GO:0005829">
    <property type="term" value="C:cytosol"/>
    <property type="evidence" value="ECO:0007669"/>
    <property type="project" value="TreeGrafter"/>
</dbReference>
<dbReference type="GO" id="GO:0000175">
    <property type="term" value="F:3'-5'-RNA exonuclease activity"/>
    <property type="evidence" value="ECO:0007669"/>
    <property type="project" value="TreeGrafter"/>
</dbReference>
<dbReference type="GO" id="GO:0000287">
    <property type="term" value="F:magnesium ion binding"/>
    <property type="evidence" value="ECO:0007669"/>
    <property type="project" value="UniProtKB-UniRule"/>
</dbReference>
<dbReference type="GO" id="GO:0004654">
    <property type="term" value="F:polyribonucleotide nucleotidyltransferase activity"/>
    <property type="evidence" value="ECO:0007669"/>
    <property type="project" value="UniProtKB-UniRule"/>
</dbReference>
<dbReference type="GO" id="GO:0003723">
    <property type="term" value="F:RNA binding"/>
    <property type="evidence" value="ECO:0007669"/>
    <property type="project" value="UniProtKB-UniRule"/>
</dbReference>
<dbReference type="GO" id="GO:0006402">
    <property type="term" value="P:mRNA catabolic process"/>
    <property type="evidence" value="ECO:0007669"/>
    <property type="project" value="UniProtKB-UniRule"/>
</dbReference>
<dbReference type="GO" id="GO:0006396">
    <property type="term" value="P:RNA processing"/>
    <property type="evidence" value="ECO:0007669"/>
    <property type="project" value="InterPro"/>
</dbReference>
<dbReference type="CDD" id="cd02393">
    <property type="entry name" value="KH-I_PNPase"/>
    <property type="match status" value="1"/>
</dbReference>
<dbReference type="CDD" id="cd11363">
    <property type="entry name" value="RNase_PH_PNPase_1"/>
    <property type="match status" value="1"/>
</dbReference>
<dbReference type="CDD" id="cd11364">
    <property type="entry name" value="RNase_PH_PNPase_2"/>
    <property type="match status" value="1"/>
</dbReference>
<dbReference type="CDD" id="cd04472">
    <property type="entry name" value="S1_PNPase"/>
    <property type="match status" value="1"/>
</dbReference>
<dbReference type="FunFam" id="2.40.50.140:FF:000023">
    <property type="entry name" value="Polyribonucleotide nucleotidyltransferase"/>
    <property type="match status" value="1"/>
</dbReference>
<dbReference type="FunFam" id="3.30.1370.10:FF:000001">
    <property type="entry name" value="Polyribonucleotide nucleotidyltransferase"/>
    <property type="match status" value="1"/>
</dbReference>
<dbReference type="FunFam" id="3.30.230.70:FF:000001">
    <property type="entry name" value="Polyribonucleotide nucleotidyltransferase"/>
    <property type="match status" value="1"/>
</dbReference>
<dbReference type="FunFam" id="3.30.230.70:FF:000002">
    <property type="entry name" value="Polyribonucleotide nucleotidyltransferase"/>
    <property type="match status" value="1"/>
</dbReference>
<dbReference type="Gene3D" id="3.30.230.70">
    <property type="entry name" value="GHMP Kinase, N-terminal domain"/>
    <property type="match status" value="2"/>
</dbReference>
<dbReference type="Gene3D" id="3.30.1370.10">
    <property type="entry name" value="K Homology domain, type 1"/>
    <property type="match status" value="1"/>
</dbReference>
<dbReference type="Gene3D" id="2.40.50.140">
    <property type="entry name" value="Nucleic acid-binding proteins"/>
    <property type="match status" value="1"/>
</dbReference>
<dbReference type="HAMAP" id="MF_01595">
    <property type="entry name" value="PNPase"/>
    <property type="match status" value="1"/>
</dbReference>
<dbReference type="InterPro" id="IPR001247">
    <property type="entry name" value="ExoRNase_PH_dom1"/>
</dbReference>
<dbReference type="InterPro" id="IPR015847">
    <property type="entry name" value="ExoRNase_PH_dom2"/>
</dbReference>
<dbReference type="InterPro" id="IPR036345">
    <property type="entry name" value="ExoRNase_PH_dom2_sf"/>
</dbReference>
<dbReference type="InterPro" id="IPR004087">
    <property type="entry name" value="KH_dom"/>
</dbReference>
<dbReference type="InterPro" id="IPR004088">
    <property type="entry name" value="KH_dom_type_1"/>
</dbReference>
<dbReference type="InterPro" id="IPR036612">
    <property type="entry name" value="KH_dom_type_1_sf"/>
</dbReference>
<dbReference type="InterPro" id="IPR012340">
    <property type="entry name" value="NA-bd_OB-fold"/>
</dbReference>
<dbReference type="InterPro" id="IPR012162">
    <property type="entry name" value="PNPase"/>
</dbReference>
<dbReference type="InterPro" id="IPR027408">
    <property type="entry name" value="PNPase/RNase_PH_dom_sf"/>
</dbReference>
<dbReference type="InterPro" id="IPR015848">
    <property type="entry name" value="PNPase_PH_RNA-bd_bac/org-type"/>
</dbReference>
<dbReference type="InterPro" id="IPR036456">
    <property type="entry name" value="PNPase_PH_RNA-bd_sf"/>
</dbReference>
<dbReference type="InterPro" id="IPR020568">
    <property type="entry name" value="Ribosomal_Su5_D2-typ_SF"/>
</dbReference>
<dbReference type="InterPro" id="IPR003029">
    <property type="entry name" value="S1_domain"/>
</dbReference>
<dbReference type="NCBIfam" id="TIGR03591">
    <property type="entry name" value="polynuc_phos"/>
    <property type="match status" value="1"/>
</dbReference>
<dbReference type="NCBIfam" id="NF008805">
    <property type="entry name" value="PRK11824.1"/>
    <property type="match status" value="1"/>
</dbReference>
<dbReference type="PANTHER" id="PTHR11252">
    <property type="entry name" value="POLYRIBONUCLEOTIDE NUCLEOTIDYLTRANSFERASE"/>
    <property type="match status" value="1"/>
</dbReference>
<dbReference type="PANTHER" id="PTHR11252:SF0">
    <property type="entry name" value="POLYRIBONUCLEOTIDE NUCLEOTIDYLTRANSFERASE 1, MITOCHONDRIAL"/>
    <property type="match status" value="1"/>
</dbReference>
<dbReference type="Pfam" id="PF00013">
    <property type="entry name" value="KH_1"/>
    <property type="match status" value="1"/>
</dbReference>
<dbReference type="Pfam" id="PF03726">
    <property type="entry name" value="PNPase"/>
    <property type="match status" value="1"/>
</dbReference>
<dbReference type="Pfam" id="PF01138">
    <property type="entry name" value="RNase_PH"/>
    <property type="match status" value="2"/>
</dbReference>
<dbReference type="Pfam" id="PF03725">
    <property type="entry name" value="RNase_PH_C"/>
    <property type="match status" value="2"/>
</dbReference>
<dbReference type="Pfam" id="PF00575">
    <property type="entry name" value="S1"/>
    <property type="match status" value="1"/>
</dbReference>
<dbReference type="PIRSF" id="PIRSF005499">
    <property type="entry name" value="PNPase"/>
    <property type="match status" value="1"/>
</dbReference>
<dbReference type="SMART" id="SM00322">
    <property type="entry name" value="KH"/>
    <property type="match status" value="1"/>
</dbReference>
<dbReference type="SMART" id="SM00316">
    <property type="entry name" value="S1"/>
    <property type="match status" value="1"/>
</dbReference>
<dbReference type="SUPFAM" id="SSF54791">
    <property type="entry name" value="Eukaryotic type KH-domain (KH-domain type I)"/>
    <property type="match status" value="1"/>
</dbReference>
<dbReference type="SUPFAM" id="SSF50249">
    <property type="entry name" value="Nucleic acid-binding proteins"/>
    <property type="match status" value="1"/>
</dbReference>
<dbReference type="SUPFAM" id="SSF46915">
    <property type="entry name" value="Polynucleotide phosphorylase/guanosine pentaphosphate synthase (PNPase/GPSI), domain 3"/>
    <property type="match status" value="1"/>
</dbReference>
<dbReference type="SUPFAM" id="SSF55666">
    <property type="entry name" value="Ribonuclease PH domain 2-like"/>
    <property type="match status" value="2"/>
</dbReference>
<dbReference type="SUPFAM" id="SSF54211">
    <property type="entry name" value="Ribosomal protein S5 domain 2-like"/>
    <property type="match status" value="2"/>
</dbReference>
<dbReference type="PROSITE" id="PS50084">
    <property type="entry name" value="KH_TYPE_1"/>
    <property type="match status" value="1"/>
</dbReference>
<dbReference type="PROSITE" id="PS50126">
    <property type="entry name" value="S1"/>
    <property type="match status" value="1"/>
</dbReference>
<accession>Q0HXR0</accession>
<name>PNP_SHESR</name>
<organism>
    <name type="scientific">Shewanella sp. (strain MR-7)</name>
    <dbReference type="NCBI Taxonomy" id="60481"/>
    <lineage>
        <taxon>Bacteria</taxon>
        <taxon>Pseudomonadati</taxon>
        <taxon>Pseudomonadota</taxon>
        <taxon>Gammaproteobacteria</taxon>
        <taxon>Alteromonadales</taxon>
        <taxon>Shewanellaceae</taxon>
        <taxon>Shewanella</taxon>
    </lineage>
</organism>
<feature type="chain" id="PRO_0000329846" description="Polyribonucleotide nucleotidyltransferase">
    <location>
        <begin position="1"/>
        <end position="699"/>
    </location>
</feature>
<feature type="domain" description="KH" evidence="1">
    <location>
        <begin position="552"/>
        <end position="611"/>
    </location>
</feature>
<feature type="domain" description="S1 motif" evidence="1">
    <location>
        <begin position="621"/>
        <end position="689"/>
    </location>
</feature>
<feature type="binding site" evidence="1">
    <location>
        <position position="485"/>
    </location>
    <ligand>
        <name>Mg(2+)</name>
        <dbReference type="ChEBI" id="CHEBI:18420"/>
    </ligand>
</feature>
<feature type="binding site" evidence="1">
    <location>
        <position position="491"/>
    </location>
    <ligand>
        <name>Mg(2+)</name>
        <dbReference type="ChEBI" id="CHEBI:18420"/>
    </ligand>
</feature>
<keyword id="KW-0963">Cytoplasm</keyword>
<keyword id="KW-0460">Magnesium</keyword>
<keyword id="KW-0479">Metal-binding</keyword>
<keyword id="KW-0548">Nucleotidyltransferase</keyword>
<keyword id="KW-0694">RNA-binding</keyword>
<keyword id="KW-0808">Transferase</keyword>
<gene>
    <name evidence="1" type="primary">pnp</name>
    <name type="ordered locus">Shewmr7_1096</name>
</gene>
<proteinExistence type="inferred from homology"/>
<comment type="function">
    <text evidence="1">Involved in mRNA degradation. Catalyzes the phosphorolysis of single-stranded polyribonucleotides processively in the 3'- to 5'-direction.</text>
</comment>
<comment type="catalytic activity">
    <reaction evidence="1">
        <text>RNA(n+1) + phosphate = RNA(n) + a ribonucleoside 5'-diphosphate</text>
        <dbReference type="Rhea" id="RHEA:22096"/>
        <dbReference type="Rhea" id="RHEA-COMP:14527"/>
        <dbReference type="Rhea" id="RHEA-COMP:17342"/>
        <dbReference type="ChEBI" id="CHEBI:43474"/>
        <dbReference type="ChEBI" id="CHEBI:57930"/>
        <dbReference type="ChEBI" id="CHEBI:140395"/>
        <dbReference type="EC" id="2.7.7.8"/>
    </reaction>
</comment>
<comment type="cofactor">
    <cofactor evidence="1">
        <name>Mg(2+)</name>
        <dbReference type="ChEBI" id="CHEBI:18420"/>
    </cofactor>
</comment>
<comment type="subunit">
    <text evidence="1">Component of the RNA degradosome, which is a multiprotein complex involved in RNA processing and mRNA degradation.</text>
</comment>
<comment type="subcellular location">
    <subcellularLocation>
        <location evidence="1">Cytoplasm</location>
    </subcellularLocation>
</comment>
<comment type="similarity">
    <text evidence="1">Belongs to the polyribonucleotide nucleotidyltransferase family.</text>
</comment>